<accession>A3DA79</accession>
<protein>
    <recommendedName>
        <fullName evidence="1">Glutamate racemase</fullName>
        <ecNumber evidence="1">5.1.1.3</ecNumber>
    </recommendedName>
</protein>
<dbReference type="EC" id="5.1.1.3" evidence="1"/>
<dbReference type="EMBL" id="CP000563">
    <property type="protein sequence ID" value="ABN63642.1"/>
    <property type="molecule type" value="Genomic_DNA"/>
</dbReference>
<dbReference type="RefSeq" id="WP_011848154.1">
    <property type="nucleotide sequence ID" value="NC_009052.1"/>
</dbReference>
<dbReference type="SMR" id="A3DA79"/>
<dbReference type="STRING" id="325240.Sbal_4177"/>
<dbReference type="KEGG" id="sbl:Sbal_4177"/>
<dbReference type="HOGENOM" id="CLU_052344_2_0_6"/>
<dbReference type="OrthoDB" id="9801055at2"/>
<dbReference type="UniPathway" id="UPA00219"/>
<dbReference type="Proteomes" id="UP000001557">
    <property type="component" value="Chromosome"/>
</dbReference>
<dbReference type="GO" id="GO:0008881">
    <property type="term" value="F:glutamate racemase activity"/>
    <property type="evidence" value="ECO:0007669"/>
    <property type="project" value="UniProtKB-UniRule"/>
</dbReference>
<dbReference type="GO" id="GO:0071555">
    <property type="term" value="P:cell wall organization"/>
    <property type="evidence" value="ECO:0007669"/>
    <property type="project" value="UniProtKB-KW"/>
</dbReference>
<dbReference type="GO" id="GO:0009252">
    <property type="term" value="P:peptidoglycan biosynthetic process"/>
    <property type="evidence" value="ECO:0007669"/>
    <property type="project" value="UniProtKB-UniRule"/>
</dbReference>
<dbReference type="GO" id="GO:0008360">
    <property type="term" value="P:regulation of cell shape"/>
    <property type="evidence" value="ECO:0007669"/>
    <property type="project" value="UniProtKB-KW"/>
</dbReference>
<dbReference type="FunFam" id="3.40.50.1860:FF:000001">
    <property type="entry name" value="Glutamate racemase"/>
    <property type="match status" value="1"/>
</dbReference>
<dbReference type="Gene3D" id="3.40.50.1860">
    <property type="match status" value="2"/>
</dbReference>
<dbReference type="HAMAP" id="MF_00258">
    <property type="entry name" value="Glu_racemase"/>
    <property type="match status" value="1"/>
</dbReference>
<dbReference type="InterPro" id="IPR015942">
    <property type="entry name" value="Asp/Glu/hydantoin_racemase"/>
</dbReference>
<dbReference type="InterPro" id="IPR001920">
    <property type="entry name" value="Asp/Glu_race"/>
</dbReference>
<dbReference type="InterPro" id="IPR018187">
    <property type="entry name" value="Asp/Glu_racemase_AS_1"/>
</dbReference>
<dbReference type="InterPro" id="IPR033134">
    <property type="entry name" value="Asp/Glu_racemase_AS_2"/>
</dbReference>
<dbReference type="InterPro" id="IPR004391">
    <property type="entry name" value="Glu_race"/>
</dbReference>
<dbReference type="NCBIfam" id="TIGR00067">
    <property type="entry name" value="glut_race"/>
    <property type="match status" value="1"/>
</dbReference>
<dbReference type="PANTHER" id="PTHR21198">
    <property type="entry name" value="GLUTAMATE RACEMASE"/>
    <property type="match status" value="1"/>
</dbReference>
<dbReference type="PANTHER" id="PTHR21198:SF2">
    <property type="entry name" value="GLUTAMATE RACEMASE"/>
    <property type="match status" value="1"/>
</dbReference>
<dbReference type="Pfam" id="PF01177">
    <property type="entry name" value="Asp_Glu_race"/>
    <property type="match status" value="1"/>
</dbReference>
<dbReference type="SUPFAM" id="SSF53681">
    <property type="entry name" value="Aspartate/glutamate racemase"/>
    <property type="match status" value="2"/>
</dbReference>
<dbReference type="PROSITE" id="PS00923">
    <property type="entry name" value="ASP_GLU_RACEMASE_1"/>
    <property type="match status" value="1"/>
</dbReference>
<dbReference type="PROSITE" id="PS00924">
    <property type="entry name" value="ASP_GLU_RACEMASE_2"/>
    <property type="match status" value="1"/>
</dbReference>
<feature type="chain" id="PRO_1000047603" description="Glutamate racemase">
    <location>
        <begin position="1"/>
        <end position="274"/>
    </location>
</feature>
<feature type="active site" description="Proton donor/acceptor" evidence="1">
    <location>
        <position position="73"/>
    </location>
</feature>
<feature type="active site" description="Proton donor/acceptor" evidence="1">
    <location>
        <position position="183"/>
    </location>
</feature>
<feature type="binding site" evidence="1">
    <location>
        <begin position="9"/>
        <end position="10"/>
    </location>
    <ligand>
        <name>substrate</name>
    </ligand>
</feature>
<feature type="binding site" evidence="1">
    <location>
        <begin position="41"/>
        <end position="42"/>
    </location>
    <ligand>
        <name>substrate</name>
    </ligand>
</feature>
<feature type="binding site" evidence="1">
    <location>
        <begin position="74"/>
        <end position="75"/>
    </location>
    <ligand>
        <name>substrate</name>
    </ligand>
</feature>
<feature type="binding site" evidence="1">
    <location>
        <begin position="184"/>
        <end position="185"/>
    </location>
    <ligand>
        <name>substrate</name>
    </ligand>
</feature>
<keyword id="KW-0133">Cell shape</keyword>
<keyword id="KW-0961">Cell wall biogenesis/degradation</keyword>
<keyword id="KW-0413">Isomerase</keyword>
<keyword id="KW-0573">Peptidoglycan synthesis</keyword>
<keyword id="KW-1185">Reference proteome</keyword>
<comment type="function">
    <text evidence="1">Provides the (R)-glutamate required for cell wall biosynthesis.</text>
</comment>
<comment type="catalytic activity">
    <reaction evidence="1">
        <text>L-glutamate = D-glutamate</text>
        <dbReference type="Rhea" id="RHEA:12813"/>
        <dbReference type="ChEBI" id="CHEBI:29985"/>
        <dbReference type="ChEBI" id="CHEBI:29986"/>
        <dbReference type="EC" id="5.1.1.3"/>
    </reaction>
</comment>
<comment type="pathway">
    <text evidence="1">Cell wall biogenesis; peptidoglycan biosynthesis.</text>
</comment>
<comment type="similarity">
    <text evidence="1">Belongs to the aspartate/glutamate racemases family.</text>
</comment>
<evidence type="ECO:0000255" key="1">
    <source>
        <dbReference type="HAMAP-Rule" id="MF_00258"/>
    </source>
</evidence>
<gene>
    <name evidence="1" type="primary">murI</name>
    <name type="ordered locus">Sbal_4177</name>
</gene>
<proteinExistence type="inferred from homology"/>
<sequence length="274" mass="29542">MSRPILVFDSGIGGLSVLAEIRKSLPHSDYCYLFDNARLPYGELEEQVLIAGCVALVCDLVARTNAMIVVVACNTASTVVLPALRANLSIPVVGVVPAIKPAAQMSKSKRIGLLATPGTVKRHYTHELISQFADDCHVELFGCSELVMMAEQKIATGQMDMHRLADLLAPVVAAQLDVLVLGCTHFPMIQAELQQVLGAGVTLMDSGAAIAKRVVTLLTQQNLIVEERRVTNERETLGESAMQAFYTKAEISEGLTTTLIDCGFSTIERITTTN</sequence>
<reference key="1">
    <citation type="submission" date="2007-02" db="EMBL/GenBank/DDBJ databases">
        <title>Complete sequence of chromosome of Shewanella baltica OS155.</title>
        <authorList>
            <consortium name="US DOE Joint Genome Institute"/>
            <person name="Copeland A."/>
            <person name="Lucas S."/>
            <person name="Lapidus A."/>
            <person name="Barry K."/>
            <person name="Detter J.C."/>
            <person name="Glavina del Rio T."/>
            <person name="Hammon N."/>
            <person name="Israni S."/>
            <person name="Dalin E."/>
            <person name="Tice H."/>
            <person name="Pitluck S."/>
            <person name="Sims D.R."/>
            <person name="Brettin T."/>
            <person name="Bruce D."/>
            <person name="Han C."/>
            <person name="Tapia R."/>
            <person name="Brainard J."/>
            <person name="Schmutz J."/>
            <person name="Larimer F."/>
            <person name="Land M."/>
            <person name="Hauser L."/>
            <person name="Kyrpides N."/>
            <person name="Mikhailova N."/>
            <person name="Brettar I."/>
            <person name="Klappenbach J."/>
            <person name="Konstantinidis K."/>
            <person name="Rodrigues J."/>
            <person name="Tiedje J."/>
            <person name="Richardson P."/>
        </authorList>
    </citation>
    <scope>NUCLEOTIDE SEQUENCE [LARGE SCALE GENOMIC DNA]</scope>
    <source>
        <strain>OS155 / ATCC BAA-1091</strain>
    </source>
</reference>
<name>MURI_SHEB5</name>
<organism>
    <name type="scientific">Shewanella baltica (strain OS155 / ATCC BAA-1091)</name>
    <dbReference type="NCBI Taxonomy" id="325240"/>
    <lineage>
        <taxon>Bacteria</taxon>
        <taxon>Pseudomonadati</taxon>
        <taxon>Pseudomonadota</taxon>
        <taxon>Gammaproteobacteria</taxon>
        <taxon>Alteromonadales</taxon>
        <taxon>Shewanellaceae</taxon>
        <taxon>Shewanella</taxon>
    </lineage>
</organism>